<evidence type="ECO:0000255" key="1"/>
<evidence type="ECO:0000256" key="2">
    <source>
        <dbReference type="SAM" id="MobiDB-lite"/>
    </source>
</evidence>
<evidence type="ECO:0000269" key="3">
    <source>
    </source>
</evidence>
<evidence type="ECO:0000269" key="4">
    <source>
    </source>
</evidence>
<evidence type="ECO:0000269" key="5">
    <source>
    </source>
</evidence>
<evidence type="ECO:0000269" key="6">
    <source>
    </source>
</evidence>
<evidence type="ECO:0000269" key="7">
    <source>
    </source>
</evidence>
<evidence type="ECO:0000305" key="8"/>
<evidence type="ECO:0000305" key="9">
    <source>
    </source>
</evidence>
<evidence type="ECO:0000305" key="10">
    <source>
    </source>
</evidence>
<evidence type="ECO:0000312" key="11">
    <source>
        <dbReference type="EMBL" id="CCP44416.1"/>
    </source>
</evidence>
<sequence length="1011" mass="88455">MSFLLVEPDLVTAAAANLAGIRSALSEAAAAASTPTTALASAGADEVSAAVSRLFGAYGQQFQALNARAATFHAEFVSLLNGGAAAYTGAEAASVSSMQALLDAVNAPTQTLLGRPLIGNGADGVAGTGSNAGGNGGPGGILYGNGGNGGAGGNGGAAGLIGNGGAGGAGGAGGAGGAGGAGGTGGLLYGNGGAGGNGGSAAAAGGAGGNALLFGNGGNGGSGASGGAAGHAGTIFGNGGNAGAGSGLAGADGGLFGNGGDGGSSTSKAGGAGGNALFGNGGDGGSSTVAAGGAGGNTLVGNGGAGGAGGTSGLTGSGVAGGAGGSVGLWGSGGAGGDGGAATSLLGVGMNAGAGGAGGNAGLLYGNGGAGGAGGNGGDTTVPLFDSGVGGAGGAGGNASLFGNGGTGGVGGKGGTSSDLASATSGAGGAGGAGGVGGLLYGNGGNGGAGGIGGAAINILANAGAGGAGGAAGSSFIGNGGNGGAGGAGGAAALFSSGVGGAGGSGGTALLLGSGGAGGNGGTGGANSGSLFASPGGTGGAGGHGGAGGLIWGNGGAGGNGGNGGTTADGALEGGTGGIGGTGGSAIAFGNGGQGGAGGTGGDHSGGNGIGGKGGASGNGGNAGQVFGDGGTGGTGGAGGAGSGTKAGGTGSDGGHGGNATLIGNGGDGGAGGAGGAGSPAGAPGNGGTGGTGGVLFGQSGSSGPPGAAALAFPSLSSSVPILGPYEDLIANTVANLASIGNTWLADPAPFLQQYLANQFGYGQLTLTALTDATRDFAIGLAGIPPSLQSALQALAAGDVSGAVTDVLGAVVKVFVSGVDASDLSNILLLGPVGDLFPILSIPGAMSQNFTNVVMTVTDTTIAFSIDTTNLTGVMTFGLPLAMTLNAVGSPITTAIAFAESTTAFVSAVQAGNLQAAAAALVGAPANVANGFLNGEARLPLALPTSATGGIPVTVEVPVGGILAPLQPFQATAVIPVIGPVTVTLEGTPAGGIVPALVNYAPTQLAQAIAP</sequence>
<protein>
    <recommendedName>
        <fullName evidence="8">PE-PGRS family protein PE_PGRS30</fullName>
    </recommendedName>
</protein>
<name>PG30_MYCTU</name>
<gene>
    <name evidence="11" type="primary">PE_PGRS30</name>
    <name evidence="11" type="ordered locus">Rv1651c</name>
</gene>
<organism>
    <name type="scientific">Mycobacterium tuberculosis (strain ATCC 25618 / H37Rv)</name>
    <dbReference type="NCBI Taxonomy" id="83332"/>
    <lineage>
        <taxon>Bacteria</taxon>
        <taxon>Bacillati</taxon>
        <taxon>Actinomycetota</taxon>
        <taxon>Actinomycetes</taxon>
        <taxon>Mycobacteriales</taxon>
        <taxon>Mycobacteriaceae</taxon>
        <taxon>Mycobacterium</taxon>
        <taxon>Mycobacterium tuberculosis complex</taxon>
    </lineage>
</organism>
<dbReference type="EMBL" id="AL123456">
    <property type="protein sequence ID" value="CCP44416.1"/>
    <property type="molecule type" value="Genomic_DNA"/>
</dbReference>
<dbReference type="RefSeq" id="WP_010886125.1">
    <property type="nucleotide sequence ID" value="NZ_KK339370.1"/>
</dbReference>
<dbReference type="RefSeq" id="YP_177826.1">
    <property type="nucleotide sequence ID" value="NC_000962.3"/>
</dbReference>
<dbReference type="STRING" id="83332.Rv1651c"/>
<dbReference type="PaxDb" id="83332-Rv1651c"/>
<dbReference type="DNASU" id="885174"/>
<dbReference type="GeneID" id="885174"/>
<dbReference type="KEGG" id="mtu:Rv1651c"/>
<dbReference type="KEGG" id="mtv:RVBD_1651c"/>
<dbReference type="PATRIC" id="fig|83332.111.peg.1836"/>
<dbReference type="TubercuList" id="Rv1651c"/>
<dbReference type="eggNOG" id="COG3391">
    <property type="taxonomic scope" value="Bacteria"/>
</dbReference>
<dbReference type="InParanoid" id="Q79FL8"/>
<dbReference type="OrthoDB" id="4761540at2"/>
<dbReference type="Proteomes" id="UP000001584">
    <property type="component" value="Chromosome"/>
</dbReference>
<dbReference type="GO" id="GO:0009986">
    <property type="term" value="C:cell surface"/>
    <property type="evidence" value="ECO:0007669"/>
    <property type="project" value="UniProtKB-SubCell"/>
</dbReference>
<dbReference type="GO" id="GO:0005576">
    <property type="term" value="C:extracellular region"/>
    <property type="evidence" value="ECO:0007669"/>
    <property type="project" value="UniProtKB-KW"/>
</dbReference>
<dbReference type="Gene3D" id="1.10.287.850">
    <property type="entry name" value="HP0062-like domain"/>
    <property type="match status" value="1"/>
</dbReference>
<dbReference type="InterPro" id="IPR000084">
    <property type="entry name" value="PE-PGRS_N"/>
</dbReference>
<dbReference type="Pfam" id="PF00934">
    <property type="entry name" value="PE"/>
    <property type="match status" value="1"/>
</dbReference>
<dbReference type="PRINTS" id="PR01228">
    <property type="entry name" value="EGGSHELL"/>
</dbReference>
<dbReference type="SUPFAM" id="SSF140459">
    <property type="entry name" value="PE/PPE dimer-like"/>
    <property type="match status" value="1"/>
</dbReference>
<keyword id="KW-0134">Cell wall</keyword>
<keyword id="KW-1185">Reference proteome</keyword>
<keyword id="KW-0964">Secreted</keyword>
<keyword id="KW-0843">Virulence</keyword>
<feature type="chain" id="PRO_5004287725" description="PE-PGRS family protein PE_PGRS30">
    <location>
        <begin position="1"/>
        <end position="1011"/>
    </location>
</feature>
<feature type="domain" description="PE" evidence="1 9">
    <location>
        <begin position="1"/>
        <end position="93"/>
    </location>
</feature>
<feature type="region of interest" description="PGRS domain" evidence="9">
    <location>
        <begin position="130"/>
        <end position="696"/>
    </location>
</feature>
<feature type="region of interest" description="Disordered" evidence="2">
    <location>
        <begin position="595"/>
        <end position="701"/>
    </location>
</feature>
<feature type="region of interest" description="C-terminal domain" evidence="9">
    <location>
        <begin position="697"/>
        <end position="1011"/>
    </location>
</feature>
<feature type="compositionally biased region" description="Gly residues" evidence="2">
    <location>
        <begin position="595"/>
        <end position="696"/>
    </location>
</feature>
<proteinExistence type="evidence at protein level"/>
<comment type="function">
    <text evidence="4 7">Mediates suppression of pro-inflammatory immune response in macrophages via modulation of host cytokine response (PubMed:27129781). Required for full virulence. Involved in inhibition of phago-lysosome fusion (PubMed:22050772).</text>
</comment>
<comment type="subcellular location">
    <subcellularLocation>
        <location evidence="3 5 6">Secreted</location>
        <location evidence="3 5 6">Cell wall</location>
    </subcellularLocation>
    <subcellularLocation>
        <location evidence="5 6">Cell surface</location>
    </subcellularLocation>
    <text evidence="3 5 6">Localizes at the cell poles.</text>
</comment>
<comment type="domain">
    <text evidence="4 5 6 7">Both the PE domain and the non-PGRS C-terminal domain possess independent cell wall localization signals. The PGRS domain is responsible for polar localization of PE_PGRS30 (PubMed:24530527, PubMed:25390359). PE and PGRS domains are necessary for the cytokine-modulating function (PubMed:27129781). The non-PGRS C-terminal domain is not exposed on the surface and is not required for full virulence in vivo (PubMed:22050772, PubMed:25390359).</text>
</comment>
<comment type="disruption phenotype">
    <text evidence="4">Deletion mutant is attenuated in vivo during murine tuberculosis, specifically during the chronic steps of infection. On day 28 post infection, shows a slight reduction of the bacterial burden. On day 70, shows a strong reduction of the bacterial burden. Mice infected with the mutant show smaller, non-confluent tubercules. Mutant shows impaired ability to survive and multiply within murine macrophages. It is unable to inhibit phago-lysosome fusion in THP-1 cells.</text>
</comment>
<comment type="miscellaneous">
    <text evidence="4 7 10">Infection of human THP-1 macrophages with M.smegmatis expressing PE_PGRS30 results in reduced production of IL-12, TNF-alpha and IL-6, as compared to infection with vector control M.smegmatis. No differential effects are observed on bacterial persistence inside macrophages or on macrophage mortality upon infection (PubMed:27129781). However, expression of this gene in M.smegmatis is sufficient to enhance the ability to persist intracellularly and induce murine J774 macrophages death (PubMed:22050772). Differential response of the human and murine macrophages could be due to cell-specific processes (Probable).</text>
</comment>
<comment type="similarity">
    <text evidence="8">Belongs to the mycobacterial PE family. PGRS subfamily.</text>
</comment>
<accession>Q79FL8</accession>
<accession>I6X1W4</accession>
<accession>L0T7B2</accession>
<reference key="1">
    <citation type="journal article" date="1998" name="Nature">
        <title>Deciphering the biology of Mycobacterium tuberculosis from the complete genome sequence.</title>
        <authorList>
            <person name="Cole S.T."/>
            <person name="Brosch R."/>
            <person name="Parkhill J."/>
            <person name="Garnier T."/>
            <person name="Churcher C.M."/>
            <person name="Harris D.E."/>
            <person name="Gordon S.V."/>
            <person name="Eiglmeier K."/>
            <person name="Gas S."/>
            <person name="Barry C.E. III"/>
            <person name="Tekaia F."/>
            <person name="Badcock K."/>
            <person name="Basham D."/>
            <person name="Brown D."/>
            <person name="Chillingworth T."/>
            <person name="Connor R."/>
            <person name="Davies R.M."/>
            <person name="Devlin K."/>
            <person name="Feltwell T."/>
            <person name="Gentles S."/>
            <person name="Hamlin N."/>
            <person name="Holroyd S."/>
            <person name="Hornsby T."/>
            <person name="Jagels K."/>
            <person name="Krogh A."/>
            <person name="McLean J."/>
            <person name="Moule S."/>
            <person name="Murphy L.D."/>
            <person name="Oliver S."/>
            <person name="Osborne J."/>
            <person name="Quail M.A."/>
            <person name="Rajandream M.A."/>
            <person name="Rogers J."/>
            <person name="Rutter S."/>
            <person name="Seeger K."/>
            <person name="Skelton S."/>
            <person name="Squares S."/>
            <person name="Squares R."/>
            <person name="Sulston J.E."/>
            <person name="Taylor K."/>
            <person name="Whitehead S."/>
            <person name="Barrell B.G."/>
        </authorList>
    </citation>
    <scope>NUCLEOTIDE SEQUENCE [LARGE SCALE GENOMIC DNA]</scope>
    <source>
        <strain>ATCC 25618 / H37Rv</strain>
    </source>
</reference>
<reference key="2">
    <citation type="journal article" date="2011" name="FEMS Microbiol. Lett.">
        <title>The Rv1651c-encoded PE-PGRS30 protein expressed in Mycobacterium smegmatis exhibits polar localization and modulates its growth profile.</title>
        <authorList>
            <person name="Chatrath S."/>
            <person name="Gupta V.K."/>
            <person name="Dixit A."/>
            <person name="Garg L.C."/>
        </authorList>
    </citation>
    <scope>SUBCELLULAR LOCATION</scope>
</reference>
<reference key="3">
    <citation type="journal article" date="2012" name="Cell. Microbiol.">
        <title>PE_PGRS30 is required for the full virulence of Mycobacterium tuberculosis.</title>
        <authorList>
            <person name="Iantomasi R."/>
            <person name="Sali M."/>
            <person name="Cascioferro A."/>
            <person name="Palucci I."/>
            <person name="Zumbo A."/>
            <person name="Soldini S."/>
            <person name="Rocca S."/>
            <person name="Greco E."/>
            <person name="Maulucci G."/>
            <person name="De Spirito M."/>
            <person name="Fraziano M."/>
            <person name="Fadda G."/>
            <person name="Manganelli R."/>
            <person name="Delogu G."/>
        </authorList>
    </citation>
    <scope>FUNCTION IN VIRULENCE</scope>
    <scope>DISRUPTION PHENOTYPE</scope>
    <scope>DOMAIN</scope>
    <scope>EXPRESSION IN M.SMEGMATIS</scope>
    <source>
        <strain>H37Rv</strain>
    </source>
</reference>
<reference key="4">
    <citation type="journal article" date="2014" name="FEBS Lett.">
        <title>The PGRS domain is responsible for translocation of PE_PGRS30 to cell poles while the PE and the C-terminal domains localize it to the cell wall.</title>
        <authorList>
            <person name="Chatrath S."/>
            <person name="Gupta V.K."/>
            <person name="Garg L.C."/>
        </authorList>
    </citation>
    <scope>SUBCELLULAR LOCATION</scope>
    <scope>DOMAIN</scope>
</reference>
<reference key="5">
    <citation type="journal article" date="2014" name="PLoS ONE">
        <title>Impact of protein domains on PE_PGRS30 polar localization in Mycobacteria.</title>
        <authorList>
            <person name="De Maio F."/>
            <person name="Maulucci G."/>
            <person name="Minerva M."/>
            <person name="Anoosheh S."/>
            <person name="Palucci I."/>
            <person name="Iantomasi R."/>
            <person name="Palmieri V."/>
            <person name="Camassa S."/>
            <person name="Sali M."/>
            <person name="Sanguinetti M."/>
            <person name="Bitter W."/>
            <person name="Manganelli R."/>
            <person name="De Spirito M."/>
            <person name="Delogu G."/>
        </authorList>
    </citation>
    <scope>SUBCELLULAR LOCATION</scope>
    <scope>DOMAIN</scope>
</reference>
<reference key="6">
    <citation type="journal article" date="2016" name="Microbes Infect.">
        <title>PE_PGRS30 of Mycobacterium tuberculosis mediates suppression of proinflammatory immune response in macrophages through its PGRS and PE domains.</title>
        <authorList>
            <person name="Chatrath S."/>
            <person name="Gupta V.K."/>
            <person name="Dixit A."/>
            <person name="Garg L.C."/>
        </authorList>
    </citation>
    <scope>FUNCTION</scope>
    <scope>DOMAIN</scope>
    <scope>EXPRESSION IN M.SMEGMATIS</scope>
</reference>